<proteinExistence type="inferred from homology"/>
<accession>P26917</accession>
<accession>Q3Y5Z2</accession>
<evidence type="ECO:0000250" key="1"/>
<evidence type="ECO:0000250" key="2">
    <source>
        <dbReference type="UniProtKB" id="P01168"/>
    </source>
</evidence>
<evidence type="ECO:0000250" key="3">
    <source>
        <dbReference type="UniProtKB" id="P60041"/>
    </source>
</evidence>
<evidence type="ECO:0000250" key="4">
    <source>
        <dbReference type="UniProtKB" id="P60042"/>
    </source>
</evidence>
<evidence type="ECO:0000250" key="5">
    <source>
        <dbReference type="UniProtKB" id="P61278"/>
    </source>
</evidence>
<evidence type="ECO:0000305" key="6"/>
<gene>
    <name type="primary">SST</name>
</gene>
<reference key="1">
    <citation type="journal article" date="1988" name="Mol. Endocrinol.">
        <title>Structure and evolution of somatostatin genes.</title>
        <authorList>
            <person name="Su C.J."/>
            <person name="White J.W."/>
            <person name="Li W.H."/>
            <person name="Luo C.C."/>
            <person name="Frazier M.L."/>
            <person name="Saunders G.F."/>
            <person name="Chan L."/>
        </authorList>
    </citation>
    <scope>NUCLEOTIDE SEQUENCE [MRNA]</scope>
</reference>
<reference key="2">
    <citation type="journal article" date="1999" name="J. Anim. Sci.">
        <title>Cloning and characterization of the bovine somatostatin gene.</title>
        <authorList>
            <person name="Furu L.M."/>
            <person name="Kazmer G.W."/>
            <person name="Strausbaugh L."/>
            <person name="Zinn S.A."/>
        </authorList>
    </citation>
    <scope>NUCLEOTIDE SEQUENCE [GENOMIC DNA]</scope>
    <source>
        <strain>Holstein</strain>
    </source>
</reference>
<reference key="3">
    <citation type="submission" date="2005-08" db="EMBL/GenBank/DDBJ databases">
        <authorList>
            <person name="Morsci N.S."/>
            <person name="Schnabel R.D."/>
            <person name="Taylor J.F."/>
        </authorList>
    </citation>
    <scope>NUCLEOTIDE SEQUENCE [GENOMIC DNA]</scope>
</reference>
<reference key="4">
    <citation type="submission" date="2005-08" db="EMBL/GenBank/DDBJ databases">
        <authorList>
            <consortium name="NIH - Mammalian Gene Collection (MGC) project"/>
        </authorList>
    </citation>
    <scope>NUCLEOTIDE SEQUENCE [LARGE SCALE MRNA]</scope>
    <source>
        <strain>Hereford</strain>
        <tissue>Hypothalamus</tissue>
    </source>
</reference>
<organism>
    <name type="scientific">Bos taurus</name>
    <name type="common">Bovine</name>
    <dbReference type="NCBI Taxonomy" id="9913"/>
    <lineage>
        <taxon>Eukaryota</taxon>
        <taxon>Metazoa</taxon>
        <taxon>Chordata</taxon>
        <taxon>Craniata</taxon>
        <taxon>Vertebrata</taxon>
        <taxon>Euteleostomi</taxon>
        <taxon>Mammalia</taxon>
        <taxon>Eutheria</taxon>
        <taxon>Laurasiatheria</taxon>
        <taxon>Artiodactyla</taxon>
        <taxon>Ruminantia</taxon>
        <taxon>Pecora</taxon>
        <taxon>Bovidae</taxon>
        <taxon>Bovinae</taxon>
        <taxon>Bos</taxon>
    </lineage>
</organism>
<keyword id="KW-0027">Amidation</keyword>
<keyword id="KW-0165">Cleavage on pair of basic residues</keyword>
<keyword id="KW-1015">Disulfide bond</keyword>
<keyword id="KW-0372">Hormone</keyword>
<keyword id="KW-1185">Reference proteome</keyword>
<keyword id="KW-0964">Secreted</keyword>
<keyword id="KW-0732">Signal</keyword>
<name>SMS_BOVIN</name>
<feature type="signal peptide" evidence="1">
    <location>
        <begin position="1"/>
        <end position="24"/>
    </location>
</feature>
<feature type="propeptide" id="PRO_0000033080" evidence="1">
    <location>
        <begin position="25"/>
        <end position="88"/>
    </location>
</feature>
<feature type="peptide" id="PRO_0000447373" description="Neuronostatin" evidence="5">
    <location>
        <begin position="31"/>
        <end position="43"/>
    </location>
</feature>
<feature type="peptide" id="PRO_0000033081" description="Somatostatin-28">
    <location>
        <begin position="89"/>
        <end position="116"/>
    </location>
</feature>
<feature type="peptide" id="PRO_0000033082" description="Somatostatin-14">
    <location>
        <begin position="103"/>
        <end position="116"/>
    </location>
</feature>
<feature type="modified residue" description="Alanine amide" evidence="2">
    <location>
        <position position="43"/>
    </location>
</feature>
<feature type="disulfide bond" evidence="1">
    <location>
        <begin position="105"/>
        <end position="116"/>
    </location>
</feature>
<sequence>MLSCRLQCALAALSIVLALGGVTGAPSDPRLRQFLQKSLAAAAGKQELAKYFLAELLSEPNQTEIDALEPEDLSQAAEQDEMRLELQRSANSNPAMAPRERKAGCKNFFWKTFTSC</sequence>
<dbReference type="EMBL" id="M31217">
    <property type="protein sequence ID" value="AAA30744.1"/>
    <property type="molecule type" value="mRNA"/>
</dbReference>
<dbReference type="EMBL" id="U97077">
    <property type="protein sequence ID" value="AAB58056.1"/>
    <property type="molecule type" value="Genomic_DNA"/>
</dbReference>
<dbReference type="EMBL" id="DQ156121">
    <property type="protein sequence ID" value="AAZ81422.1"/>
    <property type="molecule type" value="Genomic_DNA"/>
</dbReference>
<dbReference type="EMBL" id="BC103253">
    <property type="protein sequence ID" value="AAI03254.1"/>
    <property type="molecule type" value="mRNA"/>
</dbReference>
<dbReference type="PIR" id="A40929">
    <property type="entry name" value="RIBOS1"/>
</dbReference>
<dbReference type="RefSeq" id="NP_776385.1">
    <property type="nucleotide sequence ID" value="NM_173960.1"/>
</dbReference>
<dbReference type="STRING" id="9913.ENSBTAP00000023020"/>
<dbReference type="PaxDb" id="9913-ENSBTAP00000023020"/>
<dbReference type="GeneID" id="280932"/>
<dbReference type="KEGG" id="bta:280932"/>
<dbReference type="CTD" id="6750"/>
<dbReference type="eggNOG" id="ENOG502S11K">
    <property type="taxonomic scope" value="Eukaryota"/>
</dbReference>
<dbReference type="InParanoid" id="P26917"/>
<dbReference type="OrthoDB" id="9948948at2759"/>
<dbReference type="Proteomes" id="UP000009136">
    <property type="component" value="Unplaced"/>
</dbReference>
<dbReference type="GO" id="GO:0005615">
    <property type="term" value="C:extracellular space"/>
    <property type="evidence" value="ECO:0000318"/>
    <property type="project" value="GO_Central"/>
</dbReference>
<dbReference type="GO" id="GO:0005179">
    <property type="term" value="F:hormone activity"/>
    <property type="evidence" value="ECO:0007669"/>
    <property type="project" value="UniProtKB-KW"/>
</dbReference>
<dbReference type="GO" id="GO:0030334">
    <property type="term" value="P:regulation of cell migration"/>
    <property type="evidence" value="ECO:0000250"/>
    <property type="project" value="AgBase"/>
</dbReference>
<dbReference type="InterPro" id="IPR004250">
    <property type="entry name" value="Somatostatin"/>
</dbReference>
<dbReference type="InterPro" id="IPR018142">
    <property type="entry name" value="Somatostatin/Cortistatin_C"/>
</dbReference>
<dbReference type="PANTHER" id="PTHR10558">
    <property type="entry name" value="SOMATOSTATIN"/>
    <property type="match status" value="1"/>
</dbReference>
<dbReference type="PANTHER" id="PTHR10558:SF2">
    <property type="entry name" value="SOMATOSTATIN"/>
    <property type="match status" value="1"/>
</dbReference>
<dbReference type="Pfam" id="PF03002">
    <property type="entry name" value="Somatostatin"/>
    <property type="match status" value="1"/>
</dbReference>
<dbReference type="PIRSF" id="PIRSF001814">
    <property type="entry name" value="Somatostatin"/>
    <property type="match status" value="1"/>
</dbReference>
<comment type="function">
    <molecule>Somatostatin-14</molecule>
    <text evidence="5">Inhibits the secretion of pituitary hormones, including that of growth hormone/somatotropin (GH1), PRL, ACTH, luteinizing hormone (LH) and TSH. Also impairs ghrelin- and GnRH-stimulated secretion of GH1 and LH; the inhibition of ghrelin-stimulated secretion of GH1 can be further increased by neuronostatin.</text>
</comment>
<comment type="function">
    <molecule>Neuronostatin</molecule>
    <text evidence="3 4 5">May enhance low-glucose-induced glucagon release by pancreatic alpha cells. This effect may be mediated by binding to GPR107 and PKA activation (By similarity). May regulate cardiac contractile function (By similarity). May compromise cardiomyocyte viability. In the central nervous system, may impair memory retention and may affect hippocampal excitability. May also have anxiolytic and anorexigenic effects. May play a role in arterial pressure regulation (By similarity). May inhibit basal, but not ghrelin- or GnRH-stimulated secretion of GH1 or LH, but does not affect the release of other pituitary hormones, including PRL, ACTH, FSH or TSH. Potentiates inhibitory action of somatostatin on ghrelin-stimulated secretion of GH1, but not that on GnRH-stimulated secretion of LH (By similarity).</text>
</comment>
<comment type="subcellular location">
    <subcellularLocation>
        <location evidence="4">Secreted</location>
    </subcellularLocation>
</comment>
<comment type="PTM">
    <text evidence="4">C-terminal amidation of the neuronostatin peptide is required for its biological activity, including for the regulation of mean arterial pressure.</text>
</comment>
<comment type="similarity">
    <text evidence="6">Belongs to the somatostatin family.</text>
</comment>
<protein>
    <recommendedName>
        <fullName>Somatostatin</fullName>
    </recommendedName>
    <component>
        <recommendedName>
            <fullName>Somatostatin-28</fullName>
        </recommendedName>
    </component>
    <component>
        <recommendedName>
            <fullName>Somatostatin-14</fullName>
        </recommendedName>
    </component>
    <component>
        <recommendedName>
            <fullName>Neuronostatin</fullName>
            <shortName>NST</shortName>
        </recommendedName>
    </component>
</protein>